<keyword id="KW-0031">Aminopeptidase</keyword>
<keyword id="KW-0963">Cytoplasm</keyword>
<keyword id="KW-0378">Hydrolase</keyword>
<keyword id="KW-0464">Manganese</keyword>
<keyword id="KW-0479">Metal-binding</keyword>
<keyword id="KW-0645">Protease</keyword>
<comment type="function">
    <text evidence="1">Presumably involved in the processing and regular turnover of intracellular proteins. Catalyzes the removal of unsubstituted N-terminal amino acids from various peptides.</text>
</comment>
<comment type="catalytic activity">
    <reaction evidence="1">
        <text>Release of an N-terminal amino acid, Xaa-|-Yaa-, in which Xaa is preferably Leu, but may be other amino acids including Pro although not Arg or Lys, and Yaa may be Pro. Amino acid amides and methyl esters are also readily hydrolyzed, but rates on arylamides are exceedingly low.</text>
        <dbReference type="EC" id="3.4.11.1"/>
    </reaction>
</comment>
<comment type="catalytic activity">
    <reaction evidence="1">
        <text>Release of an N-terminal amino acid, preferentially leucine, but not glutamic or aspartic acids.</text>
        <dbReference type="EC" id="3.4.11.10"/>
    </reaction>
</comment>
<comment type="cofactor">
    <cofactor evidence="1">
        <name>Mn(2+)</name>
        <dbReference type="ChEBI" id="CHEBI:29035"/>
    </cofactor>
    <text evidence="1">Binds 2 manganese ions per subunit.</text>
</comment>
<comment type="subcellular location">
    <subcellularLocation>
        <location evidence="1">Cytoplasm</location>
    </subcellularLocation>
</comment>
<comment type="similarity">
    <text evidence="1">Belongs to the peptidase M17 family.</text>
</comment>
<sequence>MEFSVKSGSPEKQRSACIVVGVFEPRRLTSVAEQLDEISGGYLSNLLRRGDLEGKPGQMLLLHHVPNVLSERVLLVGCGKERELDERQYKQIISKTIKTLNETGSMEAVCFLSELHVKGRDTYWRVRQAVEATQDSLYTFLQLKTKKGEPRRPLRKMVFNVPTRRELTIGERAVEHGLAVSLGSKTTRDVANMPPNICNPMYLFEQAKALEAEYENLHVDSVNEKQMDALGMHSYLAVGRGSVNESIMTIMEHKGGPADQAPIVLVGKGLTFDSGGISIKPGEAMDEMKYDMGGAAGVLGAMHTISALNLPINVVGILAGCENMPDANAYRPGDILTTMSGQTVEVLNTDAEGRLVLCDALTYVERFDPELVIDVATLTGACVIALGHHATGVFSNHNPLAHELVNASEQSGDKAWRMPLWDEYQDQLESPFADMTNLGGRPAGSITAACFLSRFTRKYNWAHMDIAGTAWVGGKEKGSTGRPVPMLSQFLMNRAGIESED</sequence>
<evidence type="ECO:0000255" key="1">
    <source>
        <dbReference type="HAMAP-Rule" id="MF_00181"/>
    </source>
</evidence>
<protein>
    <recommendedName>
        <fullName evidence="1">Probable cytosol aminopeptidase</fullName>
        <ecNumber evidence="1">3.4.11.1</ecNumber>
    </recommendedName>
    <alternativeName>
        <fullName evidence="1">Leucine aminopeptidase</fullName>
        <shortName evidence="1">LAP</shortName>
        <ecNumber evidence="1">3.4.11.10</ecNumber>
    </alternativeName>
    <alternativeName>
        <fullName evidence="1">Leucyl aminopeptidase</fullName>
    </alternativeName>
</protein>
<gene>
    <name evidence="1" type="primary">pepA</name>
    <name type="ordered locus">Patl_3562</name>
</gene>
<accession>Q15PX4</accession>
<name>AMPA_PSEA6</name>
<organism>
    <name type="scientific">Pseudoalteromonas atlantica (strain T6c / ATCC BAA-1087)</name>
    <dbReference type="NCBI Taxonomy" id="3042615"/>
    <lineage>
        <taxon>Bacteria</taxon>
        <taxon>Pseudomonadati</taxon>
        <taxon>Pseudomonadota</taxon>
        <taxon>Gammaproteobacteria</taxon>
        <taxon>Alteromonadales</taxon>
        <taxon>Alteromonadaceae</taxon>
        <taxon>Paraglaciecola</taxon>
    </lineage>
</organism>
<proteinExistence type="inferred from homology"/>
<reference key="1">
    <citation type="submission" date="2006-06" db="EMBL/GenBank/DDBJ databases">
        <title>Complete sequence of Pseudoalteromonas atlantica T6c.</title>
        <authorList>
            <consortium name="US DOE Joint Genome Institute"/>
            <person name="Copeland A."/>
            <person name="Lucas S."/>
            <person name="Lapidus A."/>
            <person name="Barry K."/>
            <person name="Detter J.C."/>
            <person name="Glavina del Rio T."/>
            <person name="Hammon N."/>
            <person name="Israni S."/>
            <person name="Dalin E."/>
            <person name="Tice H."/>
            <person name="Pitluck S."/>
            <person name="Saunders E."/>
            <person name="Brettin T."/>
            <person name="Bruce D."/>
            <person name="Han C."/>
            <person name="Tapia R."/>
            <person name="Gilna P."/>
            <person name="Schmutz J."/>
            <person name="Larimer F."/>
            <person name="Land M."/>
            <person name="Hauser L."/>
            <person name="Kyrpides N."/>
            <person name="Kim E."/>
            <person name="Karls A.C."/>
            <person name="Bartlett D."/>
            <person name="Higgins B.P."/>
            <person name="Richardson P."/>
        </authorList>
    </citation>
    <scope>NUCLEOTIDE SEQUENCE [LARGE SCALE GENOMIC DNA]</scope>
    <source>
        <strain>T6c / ATCC BAA-1087</strain>
    </source>
</reference>
<feature type="chain" id="PRO_1000019953" description="Probable cytosol aminopeptidase">
    <location>
        <begin position="1"/>
        <end position="501"/>
    </location>
</feature>
<feature type="active site" evidence="1">
    <location>
        <position position="280"/>
    </location>
</feature>
<feature type="active site" evidence="1">
    <location>
        <position position="354"/>
    </location>
</feature>
<feature type="binding site" evidence="1">
    <location>
        <position position="268"/>
    </location>
    <ligand>
        <name>Mn(2+)</name>
        <dbReference type="ChEBI" id="CHEBI:29035"/>
        <label>2</label>
    </ligand>
</feature>
<feature type="binding site" evidence="1">
    <location>
        <position position="273"/>
    </location>
    <ligand>
        <name>Mn(2+)</name>
        <dbReference type="ChEBI" id="CHEBI:29035"/>
        <label>1</label>
    </ligand>
</feature>
<feature type="binding site" evidence="1">
    <location>
        <position position="273"/>
    </location>
    <ligand>
        <name>Mn(2+)</name>
        <dbReference type="ChEBI" id="CHEBI:29035"/>
        <label>2</label>
    </ligand>
</feature>
<feature type="binding site" evidence="1">
    <location>
        <position position="291"/>
    </location>
    <ligand>
        <name>Mn(2+)</name>
        <dbReference type="ChEBI" id="CHEBI:29035"/>
        <label>2</label>
    </ligand>
</feature>
<feature type="binding site" evidence="1">
    <location>
        <position position="350"/>
    </location>
    <ligand>
        <name>Mn(2+)</name>
        <dbReference type="ChEBI" id="CHEBI:29035"/>
        <label>1</label>
    </ligand>
</feature>
<feature type="binding site" evidence="1">
    <location>
        <position position="352"/>
    </location>
    <ligand>
        <name>Mn(2+)</name>
        <dbReference type="ChEBI" id="CHEBI:29035"/>
        <label>1</label>
    </ligand>
</feature>
<feature type="binding site" evidence="1">
    <location>
        <position position="352"/>
    </location>
    <ligand>
        <name>Mn(2+)</name>
        <dbReference type="ChEBI" id="CHEBI:29035"/>
        <label>2</label>
    </ligand>
</feature>
<dbReference type="EC" id="3.4.11.1" evidence="1"/>
<dbReference type="EC" id="3.4.11.10" evidence="1"/>
<dbReference type="EMBL" id="CP000388">
    <property type="protein sequence ID" value="ABG42064.1"/>
    <property type="molecule type" value="Genomic_DNA"/>
</dbReference>
<dbReference type="RefSeq" id="WP_006994216.1">
    <property type="nucleotide sequence ID" value="NC_008228.1"/>
</dbReference>
<dbReference type="SMR" id="Q15PX4"/>
<dbReference type="STRING" id="342610.Patl_3562"/>
<dbReference type="MEROPS" id="M17.003"/>
<dbReference type="KEGG" id="pat:Patl_3562"/>
<dbReference type="eggNOG" id="COG0260">
    <property type="taxonomic scope" value="Bacteria"/>
</dbReference>
<dbReference type="HOGENOM" id="CLU_013734_2_2_6"/>
<dbReference type="OrthoDB" id="9809354at2"/>
<dbReference type="Proteomes" id="UP000001981">
    <property type="component" value="Chromosome"/>
</dbReference>
<dbReference type="GO" id="GO:0005737">
    <property type="term" value="C:cytoplasm"/>
    <property type="evidence" value="ECO:0007669"/>
    <property type="project" value="UniProtKB-SubCell"/>
</dbReference>
<dbReference type="GO" id="GO:0030145">
    <property type="term" value="F:manganese ion binding"/>
    <property type="evidence" value="ECO:0007669"/>
    <property type="project" value="UniProtKB-UniRule"/>
</dbReference>
<dbReference type="GO" id="GO:0070006">
    <property type="term" value="F:metalloaminopeptidase activity"/>
    <property type="evidence" value="ECO:0007669"/>
    <property type="project" value="InterPro"/>
</dbReference>
<dbReference type="GO" id="GO:0006508">
    <property type="term" value="P:proteolysis"/>
    <property type="evidence" value="ECO:0007669"/>
    <property type="project" value="UniProtKB-KW"/>
</dbReference>
<dbReference type="CDD" id="cd00433">
    <property type="entry name" value="Peptidase_M17"/>
    <property type="match status" value="1"/>
</dbReference>
<dbReference type="FunFam" id="3.40.220.10:FF:000001">
    <property type="entry name" value="Probable cytosol aminopeptidase"/>
    <property type="match status" value="1"/>
</dbReference>
<dbReference type="FunFam" id="3.40.630.10:FF:000004">
    <property type="entry name" value="Probable cytosol aminopeptidase"/>
    <property type="match status" value="1"/>
</dbReference>
<dbReference type="Gene3D" id="3.40.220.10">
    <property type="entry name" value="Leucine Aminopeptidase, subunit E, domain 1"/>
    <property type="match status" value="1"/>
</dbReference>
<dbReference type="Gene3D" id="3.40.630.10">
    <property type="entry name" value="Zn peptidases"/>
    <property type="match status" value="1"/>
</dbReference>
<dbReference type="HAMAP" id="MF_00181">
    <property type="entry name" value="Cytosol_peptidase_M17"/>
    <property type="match status" value="1"/>
</dbReference>
<dbReference type="InterPro" id="IPR011356">
    <property type="entry name" value="Leucine_aapep/pepB"/>
</dbReference>
<dbReference type="InterPro" id="IPR043472">
    <property type="entry name" value="Macro_dom-like"/>
</dbReference>
<dbReference type="InterPro" id="IPR000819">
    <property type="entry name" value="Peptidase_M17_C"/>
</dbReference>
<dbReference type="InterPro" id="IPR023042">
    <property type="entry name" value="Peptidase_M17_leu_NH2_pept"/>
</dbReference>
<dbReference type="InterPro" id="IPR008283">
    <property type="entry name" value="Peptidase_M17_N"/>
</dbReference>
<dbReference type="NCBIfam" id="NF002072">
    <property type="entry name" value="PRK00913.1-1"/>
    <property type="match status" value="1"/>
</dbReference>
<dbReference type="NCBIfam" id="NF002074">
    <property type="entry name" value="PRK00913.1-4"/>
    <property type="match status" value="1"/>
</dbReference>
<dbReference type="PANTHER" id="PTHR11963:SF23">
    <property type="entry name" value="CYTOSOL AMINOPEPTIDASE"/>
    <property type="match status" value="1"/>
</dbReference>
<dbReference type="PANTHER" id="PTHR11963">
    <property type="entry name" value="LEUCINE AMINOPEPTIDASE-RELATED"/>
    <property type="match status" value="1"/>
</dbReference>
<dbReference type="Pfam" id="PF00883">
    <property type="entry name" value="Peptidase_M17"/>
    <property type="match status" value="1"/>
</dbReference>
<dbReference type="Pfam" id="PF02789">
    <property type="entry name" value="Peptidase_M17_N"/>
    <property type="match status" value="1"/>
</dbReference>
<dbReference type="PRINTS" id="PR00481">
    <property type="entry name" value="LAMNOPPTDASE"/>
</dbReference>
<dbReference type="SUPFAM" id="SSF52949">
    <property type="entry name" value="Macro domain-like"/>
    <property type="match status" value="1"/>
</dbReference>
<dbReference type="SUPFAM" id="SSF53187">
    <property type="entry name" value="Zn-dependent exopeptidases"/>
    <property type="match status" value="1"/>
</dbReference>
<dbReference type="PROSITE" id="PS00631">
    <property type="entry name" value="CYTOSOL_AP"/>
    <property type="match status" value="1"/>
</dbReference>